<sequence>MMGKPNSTPAKTQKSISSFFAPKSSQKPQDSSSPPASKAPGNLDDADSNEGTNEDAKITGNRLKRVLEEDENGGNTGAKERPSKRAKSVEVEEEDNESYALPAADSRKTSSSLTRGKSKPSLRTNKYMFSGSSQRATESLIEEEPEDELEKARKVELHKKFVKKLGHPDSLRRIIHEDDAALEVGDEEGEEDEEAPAPVKTKKKGAKTGKLTPMELQVIDIKRKHMDTLLIVEVGYKFKFFGEDARTAAKVLSIVCIPGKFRFDEHPSESHLNYFASASIPVHRLPVHAKRLVAAGYKIGIVRQTETAALKKAGDNRNAPFVRKLTNVYTKGTYIDDIDGLDTTDAPSGGAPATGYLLCITETKAKGWGTDEKVEVGILAVQPATGDVIYDNFEDGFMRGELETRLLHIAPCELLIVGELTKATDKLVQHLSGSSTNVFGDRIRVERVGKSKTMAAESYSRVAQFYADKLKAHQSSNNAREQELLEKVLKLTEPVTICLSAMITHMTEYGLEHVFDLTKYFQSFSARSHMLLNGNTLTSLEIYTNQTDYTQKGSLFWTLDKTQTKFGQRLLRKWVGRPLLDKQRLEERVAAVEELKDNANTPKVDKLNATLREVRSDLERSLLRIYYGKCTRPELLTVLQTMQRIANEFAHVKTPSDAGFESIALNEAVASLPAIGEIVISFLDKINAQAARNDDKYAFFLEHYETEAIGDHKCGIGAVEQDLEAHRMVAATKLSKKTPVTYVTIAGIEYLIEVPNTDLKNVPASWAKISGTKKMSRFHTPEVIKFLRERDQHKESLSSACDAAFSTFLSEISTHYALIRDTISHLATLDCLLSLATVASLPGYCKPTFTSSTEISVIGGRHPMVEQLLPSAYIPNDTSLSTSPDHTRALLLTGPNMGGKSSYVRQVALISILAQIGSYVPAESARLGLLDGIYTRMGAYDSLFTAQSTFMVELSETASILKSAGPRSLVILDELGRGTSTHDGVAIAEAVLDWVVRETKCLCLFITHYQTLASVARGFEKGKELRNVHMKFTAERNGRRVSNADADKDNEDFDEEITFLYEVGEGVAHRSYGLNVARLARVPKSVLDTAASKSRELETQVKQKKLLGLSNMISNVLENGTDQLDQLIIGMEQL</sequence>
<feature type="chain" id="PRO_0000338514" description="DNA mismatch repair protein msh3">
    <location>
        <begin position="1"/>
        <end position="1134"/>
    </location>
</feature>
<feature type="region of interest" description="Disordered" evidence="3">
    <location>
        <begin position="1"/>
        <end position="145"/>
    </location>
</feature>
<feature type="region of interest" description="Disordered" evidence="3">
    <location>
        <begin position="183"/>
        <end position="207"/>
    </location>
</feature>
<feature type="region of interest" description="Mispair-binding domain" evidence="1">
    <location>
        <begin position="208"/>
        <end position="332"/>
    </location>
</feature>
<feature type="compositionally biased region" description="Polar residues" evidence="3">
    <location>
        <begin position="1"/>
        <end position="18"/>
    </location>
</feature>
<feature type="compositionally biased region" description="Low complexity" evidence="3">
    <location>
        <begin position="21"/>
        <end position="40"/>
    </location>
</feature>
<feature type="compositionally biased region" description="Basic and acidic residues" evidence="3">
    <location>
        <begin position="78"/>
        <end position="90"/>
    </location>
</feature>
<feature type="compositionally biased region" description="Acidic residues" evidence="3">
    <location>
        <begin position="183"/>
        <end position="195"/>
    </location>
</feature>
<feature type="binding site" evidence="2">
    <location>
        <begin position="894"/>
        <end position="901"/>
    </location>
    <ligand>
        <name>ATP</name>
        <dbReference type="ChEBI" id="CHEBI:30616"/>
    </ligand>
</feature>
<protein>
    <recommendedName>
        <fullName>DNA mismatch repair protein msh3</fullName>
    </recommendedName>
    <alternativeName>
        <fullName>MutS protein homolog 3</fullName>
    </alternativeName>
</protein>
<proteinExistence type="inferred from homology"/>
<comment type="function">
    <text evidence="1">Component of the post-replicative DNA mismatch repair system (MMR). Heterodimerizes with msh2 to form MutS beta, which binds to DNA mismatches thereby initiating DNA repair. Msh3 provides substrate-binding and substrate specificity to the complex. When bound, the MutS beta heterodimer bends the DNA helix and shields approximately 20 base pairs. Acts mainly to repair insertion-deletion loops (IDLs) from 2 to 13 nucleotides in size, but can also repair base-base and single insertion-deletion mismatches that occur during replication. After mismatch binding, forms a ternary complex with the MutL alpha heterodimer, which is thought to be responsible for directing the downstream MMR events, including strand discrimination, excision, and resynthesis. ATP binding and hydrolysis play a pivotal role in mismatch repair functions (By similarity).</text>
</comment>
<comment type="subunit">
    <text evidence="1">Heterodimer consisting of msh2-msh3 (MutS beta). Forms a ternary complex with MutL alpha (mlh1-pms1) (By similarity).</text>
</comment>
<comment type="subcellular location">
    <subcellularLocation>
        <location evidence="1">Nucleus</location>
    </subcellularLocation>
</comment>
<comment type="similarity">
    <text evidence="4">Belongs to the DNA mismatch repair MutS family. MSH3 subfamily.</text>
</comment>
<organism>
    <name type="scientific">Botryotinia fuckeliana (strain B05.10)</name>
    <name type="common">Noble rot fungus</name>
    <name type="synonym">Botrytis cinerea</name>
    <dbReference type="NCBI Taxonomy" id="332648"/>
    <lineage>
        <taxon>Eukaryota</taxon>
        <taxon>Fungi</taxon>
        <taxon>Dikarya</taxon>
        <taxon>Ascomycota</taxon>
        <taxon>Pezizomycotina</taxon>
        <taxon>Leotiomycetes</taxon>
        <taxon>Helotiales</taxon>
        <taxon>Sclerotiniaceae</taxon>
        <taxon>Botrytis</taxon>
    </lineage>
</organism>
<evidence type="ECO:0000250" key="1"/>
<evidence type="ECO:0000255" key="2"/>
<evidence type="ECO:0000256" key="3">
    <source>
        <dbReference type="SAM" id="MobiDB-lite"/>
    </source>
</evidence>
<evidence type="ECO:0000305" key="4"/>
<accession>A6RPB6</accession>
<accession>A0A384JKT8</accession>
<dbReference type="EMBL" id="CP009810">
    <property type="protein sequence ID" value="ATZ51091.1"/>
    <property type="molecule type" value="Genomic_DNA"/>
</dbReference>
<dbReference type="SMR" id="A6RPB6"/>
<dbReference type="EnsemblFungi" id="Bcin06g05300.1">
    <property type="protein sequence ID" value="Bcin06p05300.1"/>
    <property type="gene ID" value="Bcin06g05300"/>
</dbReference>
<dbReference type="VEuPathDB" id="FungiDB:Bcin06g05300"/>
<dbReference type="OrthoDB" id="121051at2759"/>
<dbReference type="Proteomes" id="UP000001798">
    <property type="component" value="Chromosome bcin06"/>
</dbReference>
<dbReference type="GO" id="GO:0005634">
    <property type="term" value="C:nucleus"/>
    <property type="evidence" value="ECO:0007669"/>
    <property type="project" value="UniProtKB-SubCell"/>
</dbReference>
<dbReference type="GO" id="GO:0005524">
    <property type="term" value="F:ATP binding"/>
    <property type="evidence" value="ECO:0007669"/>
    <property type="project" value="UniProtKB-KW"/>
</dbReference>
<dbReference type="GO" id="GO:0140664">
    <property type="term" value="F:ATP-dependent DNA damage sensor activity"/>
    <property type="evidence" value="ECO:0007669"/>
    <property type="project" value="InterPro"/>
</dbReference>
<dbReference type="GO" id="GO:0030983">
    <property type="term" value="F:mismatched DNA binding"/>
    <property type="evidence" value="ECO:0007669"/>
    <property type="project" value="InterPro"/>
</dbReference>
<dbReference type="GO" id="GO:0006298">
    <property type="term" value="P:mismatch repair"/>
    <property type="evidence" value="ECO:0007669"/>
    <property type="project" value="InterPro"/>
</dbReference>
<dbReference type="GO" id="GO:0006312">
    <property type="term" value="P:mitotic recombination"/>
    <property type="evidence" value="ECO:0007669"/>
    <property type="project" value="TreeGrafter"/>
</dbReference>
<dbReference type="FunFam" id="3.30.420.110:FF:000008">
    <property type="entry name" value="DNA mismatch repair protein"/>
    <property type="match status" value="1"/>
</dbReference>
<dbReference type="FunFam" id="3.40.1170.10:FF:000006">
    <property type="entry name" value="DNA mismatch repair protein"/>
    <property type="match status" value="1"/>
</dbReference>
<dbReference type="FunFam" id="1.10.1420.10:FF:000004">
    <property type="entry name" value="DNA mismatch repair protein Msh3"/>
    <property type="match status" value="1"/>
</dbReference>
<dbReference type="FunFam" id="3.40.50.300:FF:001909">
    <property type="entry name" value="DNA mismatch repair protein msh3"/>
    <property type="match status" value="1"/>
</dbReference>
<dbReference type="Gene3D" id="1.10.1420.10">
    <property type="match status" value="2"/>
</dbReference>
<dbReference type="Gene3D" id="3.40.1170.10">
    <property type="entry name" value="DNA repair protein MutS, domain I"/>
    <property type="match status" value="1"/>
</dbReference>
<dbReference type="Gene3D" id="3.30.420.110">
    <property type="entry name" value="MutS, connector domain"/>
    <property type="match status" value="1"/>
</dbReference>
<dbReference type="Gene3D" id="3.40.50.300">
    <property type="entry name" value="P-loop containing nucleotide triphosphate hydrolases"/>
    <property type="match status" value="1"/>
</dbReference>
<dbReference type="InterPro" id="IPR007695">
    <property type="entry name" value="DNA_mismatch_repair_MutS-lik_N"/>
</dbReference>
<dbReference type="InterPro" id="IPR017261">
    <property type="entry name" value="DNA_mismatch_repair_MutS/MSH"/>
</dbReference>
<dbReference type="InterPro" id="IPR000432">
    <property type="entry name" value="DNA_mismatch_repair_MutS_C"/>
</dbReference>
<dbReference type="InterPro" id="IPR007861">
    <property type="entry name" value="DNA_mismatch_repair_MutS_clamp"/>
</dbReference>
<dbReference type="InterPro" id="IPR007696">
    <property type="entry name" value="DNA_mismatch_repair_MutS_core"/>
</dbReference>
<dbReference type="InterPro" id="IPR016151">
    <property type="entry name" value="DNA_mismatch_repair_MutS_N"/>
</dbReference>
<dbReference type="InterPro" id="IPR036187">
    <property type="entry name" value="DNA_mismatch_repair_MutS_sf"/>
</dbReference>
<dbReference type="InterPro" id="IPR045076">
    <property type="entry name" value="MutS"/>
</dbReference>
<dbReference type="InterPro" id="IPR036678">
    <property type="entry name" value="MutS_con_dom_sf"/>
</dbReference>
<dbReference type="InterPro" id="IPR027417">
    <property type="entry name" value="P-loop_NTPase"/>
</dbReference>
<dbReference type="NCBIfam" id="NF003810">
    <property type="entry name" value="PRK05399.1"/>
    <property type="match status" value="1"/>
</dbReference>
<dbReference type="PANTHER" id="PTHR11361:SF122">
    <property type="entry name" value="DNA MISMATCH REPAIR PROTEIN MSH3"/>
    <property type="match status" value="1"/>
</dbReference>
<dbReference type="PANTHER" id="PTHR11361">
    <property type="entry name" value="DNA MISMATCH REPAIR PROTEIN MUTS FAMILY MEMBER"/>
    <property type="match status" value="1"/>
</dbReference>
<dbReference type="Pfam" id="PF01624">
    <property type="entry name" value="MutS_I"/>
    <property type="match status" value="1"/>
</dbReference>
<dbReference type="Pfam" id="PF05192">
    <property type="entry name" value="MutS_III"/>
    <property type="match status" value="1"/>
</dbReference>
<dbReference type="Pfam" id="PF05190">
    <property type="entry name" value="MutS_IV"/>
    <property type="match status" value="1"/>
</dbReference>
<dbReference type="Pfam" id="PF00488">
    <property type="entry name" value="MutS_V"/>
    <property type="match status" value="1"/>
</dbReference>
<dbReference type="PIRSF" id="PIRSF037677">
    <property type="entry name" value="DNA_mis_repair_Msh6"/>
    <property type="match status" value="1"/>
</dbReference>
<dbReference type="SMART" id="SM00534">
    <property type="entry name" value="MUTSac"/>
    <property type="match status" value="1"/>
</dbReference>
<dbReference type="SMART" id="SM00533">
    <property type="entry name" value="MUTSd"/>
    <property type="match status" value="1"/>
</dbReference>
<dbReference type="SUPFAM" id="SSF55271">
    <property type="entry name" value="DNA repair protein MutS, domain I"/>
    <property type="match status" value="1"/>
</dbReference>
<dbReference type="SUPFAM" id="SSF48334">
    <property type="entry name" value="DNA repair protein MutS, domain III"/>
    <property type="match status" value="1"/>
</dbReference>
<dbReference type="SUPFAM" id="SSF52540">
    <property type="entry name" value="P-loop containing nucleoside triphosphate hydrolases"/>
    <property type="match status" value="1"/>
</dbReference>
<dbReference type="PROSITE" id="PS00486">
    <property type="entry name" value="DNA_MISMATCH_REPAIR_2"/>
    <property type="match status" value="1"/>
</dbReference>
<gene>
    <name type="primary">msh3</name>
    <name type="ORF">BC1G_02289</name>
    <name type="ORF">BCIN_06g05300</name>
</gene>
<reference key="1">
    <citation type="journal article" date="2011" name="PLoS Genet.">
        <title>Genomic analysis of the necrotrophic fungal pathogens Sclerotinia sclerotiorum and Botrytis cinerea.</title>
        <authorList>
            <person name="Amselem J."/>
            <person name="Cuomo C.A."/>
            <person name="van Kan J.A.L."/>
            <person name="Viaud M."/>
            <person name="Benito E.P."/>
            <person name="Couloux A."/>
            <person name="Coutinho P.M."/>
            <person name="de Vries R.P."/>
            <person name="Dyer P.S."/>
            <person name="Fillinger S."/>
            <person name="Fournier E."/>
            <person name="Gout L."/>
            <person name="Hahn M."/>
            <person name="Kohn L."/>
            <person name="Lapalu N."/>
            <person name="Plummer K.M."/>
            <person name="Pradier J.-M."/>
            <person name="Quevillon E."/>
            <person name="Sharon A."/>
            <person name="Simon A."/>
            <person name="ten Have A."/>
            <person name="Tudzynski B."/>
            <person name="Tudzynski P."/>
            <person name="Wincker P."/>
            <person name="Andrew M."/>
            <person name="Anthouard V."/>
            <person name="Beever R.E."/>
            <person name="Beffa R."/>
            <person name="Benoit I."/>
            <person name="Bouzid O."/>
            <person name="Brault B."/>
            <person name="Chen Z."/>
            <person name="Choquer M."/>
            <person name="Collemare J."/>
            <person name="Cotton P."/>
            <person name="Danchin E.G."/>
            <person name="Da Silva C."/>
            <person name="Gautier A."/>
            <person name="Giraud C."/>
            <person name="Giraud T."/>
            <person name="Gonzalez C."/>
            <person name="Grossetete S."/>
            <person name="Gueldener U."/>
            <person name="Henrissat B."/>
            <person name="Howlett B.J."/>
            <person name="Kodira C."/>
            <person name="Kretschmer M."/>
            <person name="Lappartient A."/>
            <person name="Leroch M."/>
            <person name="Levis C."/>
            <person name="Mauceli E."/>
            <person name="Neuveglise C."/>
            <person name="Oeser B."/>
            <person name="Pearson M."/>
            <person name="Poulain J."/>
            <person name="Poussereau N."/>
            <person name="Quesneville H."/>
            <person name="Rascle C."/>
            <person name="Schumacher J."/>
            <person name="Segurens B."/>
            <person name="Sexton A."/>
            <person name="Silva E."/>
            <person name="Sirven C."/>
            <person name="Soanes D.M."/>
            <person name="Talbot N.J."/>
            <person name="Templeton M."/>
            <person name="Yandava C."/>
            <person name="Yarden O."/>
            <person name="Zeng Q."/>
            <person name="Rollins J.A."/>
            <person name="Lebrun M.-H."/>
            <person name="Dickman M."/>
        </authorList>
    </citation>
    <scope>NUCLEOTIDE SEQUENCE [LARGE SCALE GENOMIC DNA]</scope>
    <source>
        <strain>B05.10</strain>
    </source>
</reference>
<reference key="2">
    <citation type="journal article" date="2012" name="Eukaryot. Cell">
        <title>Genome update of Botrytis cinerea strains B05.10 and T4.</title>
        <authorList>
            <person name="Staats M."/>
            <person name="van Kan J.A.L."/>
        </authorList>
    </citation>
    <scope>NUCLEOTIDE SEQUENCE [LARGE SCALE GENOMIC DNA]</scope>
    <scope>GENOME REANNOTATION</scope>
    <source>
        <strain>B05.10</strain>
    </source>
</reference>
<reference key="3">
    <citation type="journal article" date="2017" name="Mol. Plant Pathol.">
        <title>A gapless genome sequence of the fungus Botrytis cinerea.</title>
        <authorList>
            <person name="van Kan J.A.L."/>
            <person name="Stassen J.H.M."/>
            <person name="Mosbach A."/>
            <person name="van der Lee T.A.J."/>
            <person name="Faino L."/>
            <person name="Farmer A.D."/>
            <person name="Papasotiriou D.G."/>
            <person name="Zhou S."/>
            <person name="Seidl M.F."/>
            <person name="Cottam E."/>
            <person name="Edel D."/>
            <person name="Hahn M."/>
            <person name="Schwartz D.C."/>
            <person name="Dietrich R.A."/>
            <person name="Widdison S."/>
            <person name="Scalliet G."/>
        </authorList>
    </citation>
    <scope>NUCLEOTIDE SEQUENCE [LARGE SCALE GENOMIC DNA]</scope>
    <scope>GENOME REANNOTATION</scope>
    <source>
        <strain>B05.10</strain>
    </source>
</reference>
<name>MSH3_BOTFB</name>
<keyword id="KW-0067">ATP-binding</keyword>
<keyword id="KW-0227">DNA damage</keyword>
<keyword id="KW-0234">DNA repair</keyword>
<keyword id="KW-0238">DNA-binding</keyword>
<keyword id="KW-0547">Nucleotide-binding</keyword>
<keyword id="KW-0539">Nucleus</keyword>
<keyword id="KW-1185">Reference proteome</keyword>